<protein>
    <recommendedName>
        <fullName>Quinolone resistance protein NorB</fullName>
    </recommendedName>
</protein>
<name>NORB_STAAM</name>
<comment type="function">
    <text evidence="1">Multidrug efflux pump that acts independently of NorA and is one of the factors that confers resistance against diverse quinolones and chemical compounds.</text>
</comment>
<comment type="subcellular location">
    <subcellularLocation>
        <location evidence="3">Cell membrane</location>
        <topology evidence="3">Multi-pass membrane protein</topology>
    </subcellularLocation>
</comment>
<comment type="similarity">
    <text evidence="3">Belongs to the major facilitator superfamily. TCR/Tet family.</text>
</comment>
<dbReference type="EMBL" id="BA000017">
    <property type="protein sequence ID" value="BAB57598.1"/>
    <property type="molecule type" value="Genomic_DNA"/>
</dbReference>
<dbReference type="RefSeq" id="WP_000414695.1">
    <property type="nucleotide sequence ID" value="NC_002758.2"/>
</dbReference>
<dbReference type="SMR" id="Q99U52"/>
<dbReference type="KEGG" id="sav:SAV1436"/>
<dbReference type="HOGENOM" id="CLU_000960_28_3_9"/>
<dbReference type="PhylomeDB" id="Q99U52"/>
<dbReference type="Proteomes" id="UP000002481">
    <property type="component" value="Chromosome"/>
</dbReference>
<dbReference type="GO" id="GO:0005886">
    <property type="term" value="C:plasma membrane"/>
    <property type="evidence" value="ECO:0007669"/>
    <property type="project" value="UniProtKB-SubCell"/>
</dbReference>
<dbReference type="GO" id="GO:0022857">
    <property type="term" value="F:transmembrane transporter activity"/>
    <property type="evidence" value="ECO:0007669"/>
    <property type="project" value="InterPro"/>
</dbReference>
<dbReference type="GO" id="GO:0046677">
    <property type="term" value="P:response to antibiotic"/>
    <property type="evidence" value="ECO:0007669"/>
    <property type="project" value="UniProtKB-KW"/>
</dbReference>
<dbReference type="CDD" id="cd17321">
    <property type="entry name" value="MFS_MMR_MDR_like"/>
    <property type="match status" value="1"/>
</dbReference>
<dbReference type="FunFam" id="1.20.1250.20:FF:000252">
    <property type="entry name" value="Quinolone resistance protein NorB"/>
    <property type="match status" value="1"/>
</dbReference>
<dbReference type="FunFam" id="1.20.1720.10:FF:000015">
    <property type="entry name" value="Quinolone resistance protein NorB"/>
    <property type="match status" value="1"/>
</dbReference>
<dbReference type="Gene3D" id="1.20.1250.20">
    <property type="entry name" value="MFS general substrate transporter like domains"/>
    <property type="match status" value="1"/>
</dbReference>
<dbReference type="Gene3D" id="1.20.1720.10">
    <property type="entry name" value="Multidrug resistance protein D"/>
    <property type="match status" value="1"/>
</dbReference>
<dbReference type="InterPro" id="IPR011701">
    <property type="entry name" value="MFS"/>
</dbReference>
<dbReference type="InterPro" id="IPR020846">
    <property type="entry name" value="MFS_dom"/>
</dbReference>
<dbReference type="InterPro" id="IPR036259">
    <property type="entry name" value="MFS_trans_sf"/>
</dbReference>
<dbReference type="PANTHER" id="PTHR42718">
    <property type="entry name" value="MAJOR FACILITATOR SUPERFAMILY MULTIDRUG TRANSPORTER MFSC"/>
    <property type="match status" value="1"/>
</dbReference>
<dbReference type="PANTHER" id="PTHR42718:SF9">
    <property type="entry name" value="MAJOR FACILITATOR SUPERFAMILY MULTIDRUG TRANSPORTER MFSC"/>
    <property type="match status" value="1"/>
</dbReference>
<dbReference type="Pfam" id="PF07690">
    <property type="entry name" value="MFS_1"/>
    <property type="match status" value="1"/>
</dbReference>
<dbReference type="SUPFAM" id="SSF103473">
    <property type="entry name" value="MFS general substrate transporter"/>
    <property type="match status" value="1"/>
</dbReference>
<dbReference type="PROSITE" id="PS50850">
    <property type="entry name" value="MFS"/>
    <property type="match status" value="1"/>
</dbReference>
<feature type="chain" id="PRO_0000361961" description="Quinolone resistance protein NorB">
    <location>
        <begin position="1"/>
        <end position="463"/>
    </location>
</feature>
<feature type="transmembrane region" description="Helical" evidence="2">
    <location>
        <begin position="17"/>
        <end position="37"/>
    </location>
</feature>
<feature type="transmembrane region" description="Helical" evidence="2">
    <location>
        <begin position="53"/>
        <end position="73"/>
    </location>
</feature>
<feature type="transmembrane region" description="Helical" evidence="2">
    <location>
        <begin position="86"/>
        <end position="106"/>
    </location>
</feature>
<feature type="transmembrane region" description="Helical" evidence="2">
    <location>
        <begin position="107"/>
        <end position="127"/>
    </location>
</feature>
<feature type="transmembrane region" description="Helical" evidence="2">
    <location>
        <begin position="142"/>
        <end position="162"/>
    </location>
</feature>
<feature type="transmembrane region" description="Helical" evidence="2">
    <location>
        <begin position="165"/>
        <end position="185"/>
    </location>
</feature>
<feature type="transmembrane region" description="Helical" evidence="2">
    <location>
        <begin position="201"/>
        <end position="221"/>
    </location>
</feature>
<feature type="transmembrane region" description="Helical" evidence="2">
    <location>
        <begin position="230"/>
        <end position="250"/>
    </location>
</feature>
<feature type="transmembrane region" description="Helical" evidence="2">
    <location>
        <begin position="273"/>
        <end position="293"/>
    </location>
</feature>
<feature type="transmembrane region" description="Helical" evidence="2">
    <location>
        <begin position="299"/>
        <end position="319"/>
    </location>
</feature>
<feature type="transmembrane region" description="Helical" evidence="2">
    <location>
        <begin position="334"/>
        <end position="354"/>
    </location>
</feature>
<feature type="transmembrane region" description="Helical" evidence="2">
    <location>
        <begin position="357"/>
        <end position="377"/>
    </location>
</feature>
<feature type="transmembrane region" description="Helical" evidence="2">
    <location>
        <begin position="403"/>
        <end position="423"/>
    </location>
</feature>
<feature type="transmembrane region" description="Helical" evidence="2">
    <location>
        <begin position="435"/>
        <end position="455"/>
    </location>
</feature>
<evidence type="ECO:0000250" key="1"/>
<evidence type="ECO:0000255" key="2"/>
<evidence type="ECO:0000305" key="3"/>
<sequence>MEKPSREAFEGNNKLLIGIVLSVITFWLFAQSLVNVVPILEDSFNTDIGTVNIAVSITALFSGMFVVGAGGLADKYGRIKLTNIGIILNILGSLLIIISNIPLLLIIGRLIQGLSAACIMPATLSIIKSYYIGKDRQRALSYWSIGSWGGSGVCSFFGGAVATLLGWRWIFILSIIISLIALFLIKGTPETKSKSISLNKFDIKGLVLLVIMLLTLNILITKGSELGVTSLLFITLLAIAIGSFSLFIVLEKRATNPLIDFKLFKNKAYTGATASNFLLNGVAGTLIVANTFVQRGLGYSSLQAGSLSITYLVMVLIMIRVGEKLLQTLGCKKPMLIGTGVLIVGECLISLTFLPEILYVICCIIGYLFFGLGLGIYATPSTDTAIANAPLEKVGVAAGIYKMASALGGAFGVALSGAVYAIVSNMTNIYTGAMIALWLNAGMGILSFVIILLLVPKQNDTQL</sequence>
<proteinExistence type="inferred from homology"/>
<reference key="1">
    <citation type="journal article" date="2001" name="Lancet">
        <title>Whole genome sequencing of meticillin-resistant Staphylococcus aureus.</title>
        <authorList>
            <person name="Kuroda M."/>
            <person name="Ohta T."/>
            <person name="Uchiyama I."/>
            <person name="Baba T."/>
            <person name="Yuzawa H."/>
            <person name="Kobayashi I."/>
            <person name="Cui L."/>
            <person name="Oguchi A."/>
            <person name="Aoki K."/>
            <person name="Nagai Y."/>
            <person name="Lian J.-Q."/>
            <person name="Ito T."/>
            <person name="Kanamori M."/>
            <person name="Matsumaru H."/>
            <person name="Maruyama A."/>
            <person name="Murakami H."/>
            <person name="Hosoyama A."/>
            <person name="Mizutani-Ui Y."/>
            <person name="Takahashi N.K."/>
            <person name="Sawano T."/>
            <person name="Inoue R."/>
            <person name="Kaito C."/>
            <person name="Sekimizu K."/>
            <person name="Hirakawa H."/>
            <person name="Kuhara S."/>
            <person name="Goto S."/>
            <person name="Yabuzaki J."/>
            <person name="Kanehisa M."/>
            <person name="Yamashita A."/>
            <person name="Oshima K."/>
            <person name="Furuya K."/>
            <person name="Yoshino C."/>
            <person name="Shiba T."/>
            <person name="Hattori M."/>
            <person name="Ogasawara N."/>
            <person name="Hayashi H."/>
            <person name="Hiramatsu K."/>
        </authorList>
    </citation>
    <scope>NUCLEOTIDE SEQUENCE [LARGE SCALE GENOMIC DNA]</scope>
    <source>
        <strain>Mu50 / ATCC 700699</strain>
    </source>
</reference>
<accession>Q99U52</accession>
<organism>
    <name type="scientific">Staphylococcus aureus (strain Mu50 / ATCC 700699)</name>
    <dbReference type="NCBI Taxonomy" id="158878"/>
    <lineage>
        <taxon>Bacteria</taxon>
        <taxon>Bacillati</taxon>
        <taxon>Bacillota</taxon>
        <taxon>Bacilli</taxon>
        <taxon>Bacillales</taxon>
        <taxon>Staphylococcaceae</taxon>
        <taxon>Staphylococcus</taxon>
    </lineage>
</organism>
<keyword id="KW-0046">Antibiotic resistance</keyword>
<keyword id="KW-1003">Cell membrane</keyword>
<keyword id="KW-0472">Membrane</keyword>
<keyword id="KW-0812">Transmembrane</keyword>
<keyword id="KW-1133">Transmembrane helix</keyword>
<keyword id="KW-0813">Transport</keyword>
<gene>
    <name type="primary">norB</name>
    <name type="ordered locus">SAV1436</name>
</gene>